<keyword id="KW-0413">Isomerase</keyword>
<keyword id="KW-0663">Pyridoxal phosphate</keyword>
<accession>Q4ZZW2</accession>
<sequence length="357" mass="39194">MRPARAFIDLQALRHNYQLARESSGGKALAVVKADAYGHGAVRVAQALEAQADGFAVACIEEALELRAAGIRAPVLLLEGFFEADELALIVEHDLWTVVHATWQLEAIEQARLGKPITVWLKLDTGMHRVGLHPHEYQAGYQRLLATGKVARIVLMSHFSRADELNSGCSDEQLAVFETFRKGLAAETSLKNSPAVLGWPQIPSDWSRPGIMLYGATPFDQVHPLADRLQPVMTLESKIISVRELPVGEPVGYGATFVCDRPLRIGVVAMGYADGYPRHAPTGTPVQIDGQPSRLLGRVSMDMLCVDLTEVPQAGLGSRVELWGKQVLASEVAQRAETIPYEIFCNLRRVPRIYSED</sequence>
<gene>
    <name type="primary">alr</name>
    <name type="ordered locus">Psyr_0237</name>
</gene>
<comment type="function">
    <text evidence="1">Catalyzes the interconversion of L-alanine and D-alanine. May also act on other amino acids.</text>
</comment>
<comment type="catalytic activity">
    <reaction evidence="1">
        <text>L-alanine = D-alanine</text>
        <dbReference type="Rhea" id="RHEA:20249"/>
        <dbReference type="ChEBI" id="CHEBI:57416"/>
        <dbReference type="ChEBI" id="CHEBI:57972"/>
        <dbReference type="EC" id="5.1.1.1"/>
    </reaction>
</comment>
<comment type="cofactor">
    <cofactor evidence="1">
        <name>pyridoxal 5'-phosphate</name>
        <dbReference type="ChEBI" id="CHEBI:597326"/>
    </cofactor>
</comment>
<comment type="pathway">
    <text evidence="1">Amino-acid biosynthesis; D-alanine biosynthesis; D-alanine from L-alanine: step 1/1.</text>
</comment>
<comment type="similarity">
    <text evidence="1">Belongs to the alanine racemase family.</text>
</comment>
<feature type="chain" id="PRO_1000066029" description="Alanine racemase">
    <location>
        <begin position="1"/>
        <end position="357"/>
    </location>
</feature>
<feature type="active site" description="Proton acceptor; specific for D-alanine" evidence="1">
    <location>
        <position position="33"/>
    </location>
</feature>
<feature type="active site" description="Proton acceptor; specific for L-alanine" evidence="1">
    <location>
        <position position="253"/>
    </location>
</feature>
<feature type="binding site" evidence="1">
    <location>
        <position position="129"/>
    </location>
    <ligand>
        <name>substrate</name>
    </ligand>
</feature>
<feature type="binding site" evidence="1">
    <location>
        <position position="301"/>
    </location>
    <ligand>
        <name>substrate</name>
    </ligand>
</feature>
<feature type="modified residue" description="N6-(pyridoxal phosphate)lysine" evidence="1">
    <location>
        <position position="33"/>
    </location>
</feature>
<evidence type="ECO:0000255" key="1">
    <source>
        <dbReference type="HAMAP-Rule" id="MF_01201"/>
    </source>
</evidence>
<reference key="1">
    <citation type="journal article" date="2005" name="Proc. Natl. Acad. Sci. U.S.A.">
        <title>Comparison of the complete genome sequences of Pseudomonas syringae pv. syringae B728a and pv. tomato DC3000.</title>
        <authorList>
            <person name="Feil H."/>
            <person name="Feil W.S."/>
            <person name="Chain P."/>
            <person name="Larimer F."/>
            <person name="Dibartolo G."/>
            <person name="Copeland A."/>
            <person name="Lykidis A."/>
            <person name="Trong S."/>
            <person name="Nolan M."/>
            <person name="Goltsman E."/>
            <person name="Thiel J."/>
            <person name="Malfatti S."/>
            <person name="Loper J.E."/>
            <person name="Lapidus A."/>
            <person name="Detter J.C."/>
            <person name="Land M."/>
            <person name="Richardson P.M."/>
            <person name="Kyrpides N.C."/>
            <person name="Ivanova N."/>
            <person name="Lindow S.E."/>
        </authorList>
    </citation>
    <scope>NUCLEOTIDE SEQUENCE [LARGE SCALE GENOMIC DNA]</scope>
    <source>
        <strain>B728a</strain>
    </source>
</reference>
<name>ALR_PSEU2</name>
<protein>
    <recommendedName>
        <fullName evidence="1">Alanine racemase</fullName>
        <ecNumber evidence="1">5.1.1.1</ecNumber>
    </recommendedName>
</protein>
<organism>
    <name type="scientific">Pseudomonas syringae pv. syringae (strain B728a)</name>
    <dbReference type="NCBI Taxonomy" id="205918"/>
    <lineage>
        <taxon>Bacteria</taxon>
        <taxon>Pseudomonadati</taxon>
        <taxon>Pseudomonadota</taxon>
        <taxon>Gammaproteobacteria</taxon>
        <taxon>Pseudomonadales</taxon>
        <taxon>Pseudomonadaceae</taxon>
        <taxon>Pseudomonas</taxon>
        <taxon>Pseudomonas syringae</taxon>
    </lineage>
</organism>
<dbReference type="EC" id="5.1.1.1" evidence="1"/>
<dbReference type="EMBL" id="CP000075">
    <property type="protein sequence ID" value="AAY35310.1"/>
    <property type="molecule type" value="Genomic_DNA"/>
</dbReference>
<dbReference type="RefSeq" id="WP_003403944.1">
    <property type="nucleotide sequence ID" value="NC_007005.1"/>
</dbReference>
<dbReference type="RefSeq" id="YP_233348.1">
    <property type="nucleotide sequence ID" value="NC_007005.1"/>
</dbReference>
<dbReference type="SMR" id="Q4ZZW2"/>
<dbReference type="STRING" id="205918.Psyr_0237"/>
<dbReference type="KEGG" id="psb:Psyr_0237"/>
<dbReference type="PATRIC" id="fig|205918.7.peg.236"/>
<dbReference type="eggNOG" id="COG0787">
    <property type="taxonomic scope" value="Bacteria"/>
</dbReference>
<dbReference type="HOGENOM" id="CLU_028393_1_0_6"/>
<dbReference type="OrthoDB" id="9813814at2"/>
<dbReference type="UniPathway" id="UPA00042">
    <property type="reaction ID" value="UER00497"/>
</dbReference>
<dbReference type="Proteomes" id="UP000000426">
    <property type="component" value="Chromosome"/>
</dbReference>
<dbReference type="GO" id="GO:0005829">
    <property type="term" value="C:cytosol"/>
    <property type="evidence" value="ECO:0007669"/>
    <property type="project" value="TreeGrafter"/>
</dbReference>
<dbReference type="GO" id="GO:0008784">
    <property type="term" value="F:alanine racemase activity"/>
    <property type="evidence" value="ECO:0007669"/>
    <property type="project" value="UniProtKB-UniRule"/>
</dbReference>
<dbReference type="GO" id="GO:0030170">
    <property type="term" value="F:pyridoxal phosphate binding"/>
    <property type="evidence" value="ECO:0007669"/>
    <property type="project" value="UniProtKB-UniRule"/>
</dbReference>
<dbReference type="GO" id="GO:0030632">
    <property type="term" value="P:D-alanine biosynthetic process"/>
    <property type="evidence" value="ECO:0007669"/>
    <property type="project" value="UniProtKB-UniRule"/>
</dbReference>
<dbReference type="CDD" id="cd06827">
    <property type="entry name" value="PLPDE_III_AR_proteobact"/>
    <property type="match status" value="1"/>
</dbReference>
<dbReference type="FunFam" id="2.40.37.10:FF:000002">
    <property type="entry name" value="Alanine racemase"/>
    <property type="match status" value="1"/>
</dbReference>
<dbReference type="FunFam" id="3.20.20.10:FF:000002">
    <property type="entry name" value="Alanine racemase"/>
    <property type="match status" value="1"/>
</dbReference>
<dbReference type="Gene3D" id="3.20.20.10">
    <property type="entry name" value="Alanine racemase"/>
    <property type="match status" value="1"/>
</dbReference>
<dbReference type="Gene3D" id="2.40.37.10">
    <property type="entry name" value="Lyase, Ornithine Decarboxylase, Chain A, domain 1"/>
    <property type="match status" value="1"/>
</dbReference>
<dbReference type="HAMAP" id="MF_01201">
    <property type="entry name" value="Ala_racemase"/>
    <property type="match status" value="1"/>
</dbReference>
<dbReference type="InterPro" id="IPR000821">
    <property type="entry name" value="Ala_racemase"/>
</dbReference>
<dbReference type="InterPro" id="IPR009006">
    <property type="entry name" value="Ala_racemase/Decarboxylase_C"/>
</dbReference>
<dbReference type="InterPro" id="IPR011079">
    <property type="entry name" value="Ala_racemase_C"/>
</dbReference>
<dbReference type="InterPro" id="IPR001608">
    <property type="entry name" value="Ala_racemase_N"/>
</dbReference>
<dbReference type="InterPro" id="IPR020622">
    <property type="entry name" value="Ala_racemase_pyridoxalP-BS"/>
</dbReference>
<dbReference type="InterPro" id="IPR029066">
    <property type="entry name" value="PLP-binding_barrel"/>
</dbReference>
<dbReference type="NCBIfam" id="TIGR00492">
    <property type="entry name" value="alr"/>
    <property type="match status" value="1"/>
</dbReference>
<dbReference type="PANTHER" id="PTHR30511">
    <property type="entry name" value="ALANINE RACEMASE"/>
    <property type="match status" value="1"/>
</dbReference>
<dbReference type="PANTHER" id="PTHR30511:SF0">
    <property type="entry name" value="ALANINE RACEMASE, CATABOLIC-RELATED"/>
    <property type="match status" value="1"/>
</dbReference>
<dbReference type="Pfam" id="PF00842">
    <property type="entry name" value="Ala_racemase_C"/>
    <property type="match status" value="1"/>
</dbReference>
<dbReference type="Pfam" id="PF01168">
    <property type="entry name" value="Ala_racemase_N"/>
    <property type="match status" value="1"/>
</dbReference>
<dbReference type="PRINTS" id="PR00992">
    <property type="entry name" value="ALARACEMASE"/>
</dbReference>
<dbReference type="SMART" id="SM01005">
    <property type="entry name" value="Ala_racemase_C"/>
    <property type="match status" value="1"/>
</dbReference>
<dbReference type="SUPFAM" id="SSF50621">
    <property type="entry name" value="Alanine racemase C-terminal domain-like"/>
    <property type="match status" value="1"/>
</dbReference>
<dbReference type="SUPFAM" id="SSF51419">
    <property type="entry name" value="PLP-binding barrel"/>
    <property type="match status" value="1"/>
</dbReference>
<dbReference type="PROSITE" id="PS00395">
    <property type="entry name" value="ALANINE_RACEMASE"/>
    <property type="match status" value="1"/>
</dbReference>
<proteinExistence type="inferred from homology"/>